<reference key="1">
    <citation type="journal article" date="2000" name="Nature">
        <title>Sequence and analysis of chromosome 5 of the plant Arabidopsis thaliana.</title>
        <authorList>
            <person name="Tabata S."/>
            <person name="Kaneko T."/>
            <person name="Nakamura Y."/>
            <person name="Kotani H."/>
            <person name="Kato T."/>
            <person name="Asamizu E."/>
            <person name="Miyajima N."/>
            <person name="Sasamoto S."/>
            <person name="Kimura T."/>
            <person name="Hosouchi T."/>
            <person name="Kawashima K."/>
            <person name="Kohara M."/>
            <person name="Matsumoto M."/>
            <person name="Matsuno A."/>
            <person name="Muraki A."/>
            <person name="Nakayama S."/>
            <person name="Nakazaki N."/>
            <person name="Naruo K."/>
            <person name="Okumura S."/>
            <person name="Shinpo S."/>
            <person name="Takeuchi C."/>
            <person name="Wada T."/>
            <person name="Watanabe A."/>
            <person name="Yamada M."/>
            <person name="Yasuda M."/>
            <person name="Sato S."/>
            <person name="de la Bastide M."/>
            <person name="Huang E."/>
            <person name="Spiegel L."/>
            <person name="Gnoj L."/>
            <person name="O'Shaughnessy A."/>
            <person name="Preston R."/>
            <person name="Habermann K."/>
            <person name="Murray J."/>
            <person name="Johnson D."/>
            <person name="Rohlfing T."/>
            <person name="Nelson J."/>
            <person name="Stoneking T."/>
            <person name="Pepin K."/>
            <person name="Spieth J."/>
            <person name="Sekhon M."/>
            <person name="Armstrong J."/>
            <person name="Becker M."/>
            <person name="Belter E."/>
            <person name="Cordum H."/>
            <person name="Cordes M."/>
            <person name="Courtney L."/>
            <person name="Courtney W."/>
            <person name="Dante M."/>
            <person name="Du H."/>
            <person name="Edwards J."/>
            <person name="Fryman J."/>
            <person name="Haakensen B."/>
            <person name="Lamar E."/>
            <person name="Latreille P."/>
            <person name="Leonard S."/>
            <person name="Meyer R."/>
            <person name="Mulvaney E."/>
            <person name="Ozersky P."/>
            <person name="Riley A."/>
            <person name="Strowmatt C."/>
            <person name="Wagner-McPherson C."/>
            <person name="Wollam A."/>
            <person name="Yoakum M."/>
            <person name="Bell M."/>
            <person name="Dedhia N."/>
            <person name="Parnell L."/>
            <person name="Shah R."/>
            <person name="Rodriguez M."/>
            <person name="Hoon See L."/>
            <person name="Vil D."/>
            <person name="Baker J."/>
            <person name="Kirchoff K."/>
            <person name="Toth K."/>
            <person name="King L."/>
            <person name="Bahret A."/>
            <person name="Miller B."/>
            <person name="Marra M.A."/>
            <person name="Martienssen R."/>
            <person name="McCombie W.R."/>
            <person name="Wilson R.K."/>
            <person name="Murphy G."/>
            <person name="Bancroft I."/>
            <person name="Volckaert G."/>
            <person name="Wambutt R."/>
            <person name="Duesterhoeft A."/>
            <person name="Stiekema W."/>
            <person name="Pohl T."/>
            <person name="Entian K.-D."/>
            <person name="Terryn N."/>
            <person name="Hartley N."/>
            <person name="Bent E."/>
            <person name="Johnson S."/>
            <person name="Langham S.-A."/>
            <person name="McCullagh B."/>
            <person name="Robben J."/>
            <person name="Grymonprez B."/>
            <person name="Zimmermann W."/>
            <person name="Ramsperger U."/>
            <person name="Wedler H."/>
            <person name="Balke K."/>
            <person name="Wedler E."/>
            <person name="Peters S."/>
            <person name="van Staveren M."/>
            <person name="Dirkse W."/>
            <person name="Mooijman P."/>
            <person name="Klein Lankhorst R."/>
            <person name="Weitzenegger T."/>
            <person name="Bothe G."/>
            <person name="Rose M."/>
            <person name="Hauf J."/>
            <person name="Berneiser S."/>
            <person name="Hempel S."/>
            <person name="Feldpausch M."/>
            <person name="Lamberth S."/>
            <person name="Villarroel R."/>
            <person name="Gielen J."/>
            <person name="Ardiles W."/>
            <person name="Bents O."/>
            <person name="Lemcke K."/>
            <person name="Kolesov G."/>
            <person name="Mayer K.F.X."/>
            <person name="Rudd S."/>
            <person name="Schoof H."/>
            <person name="Schueller C."/>
            <person name="Zaccaria P."/>
            <person name="Mewes H.-W."/>
            <person name="Bevan M."/>
            <person name="Fransz P.F."/>
        </authorList>
    </citation>
    <scope>NUCLEOTIDE SEQUENCE [LARGE SCALE GENOMIC DNA]</scope>
    <source>
        <strain>cv. Columbia</strain>
    </source>
</reference>
<reference key="2">
    <citation type="journal article" date="2017" name="Plant J.">
        <title>Araport11: a complete reannotation of the Arabidopsis thaliana reference genome.</title>
        <authorList>
            <person name="Cheng C.Y."/>
            <person name="Krishnakumar V."/>
            <person name="Chan A.P."/>
            <person name="Thibaud-Nissen F."/>
            <person name="Schobel S."/>
            <person name="Town C.D."/>
        </authorList>
    </citation>
    <scope>GENOME REANNOTATION</scope>
    <source>
        <strain>cv. Columbia</strain>
    </source>
</reference>
<reference key="3">
    <citation type="submission" date="2006-07" db="EMBL/GenBank/DDBJ databases">
        <title>Large-scale analysis of RIKEN Arabidopsis full-length (RAFL) cDNAs.</title>
        <authorList>
            <person name="Totoki Y."/>
            <person name="Seki M."/>
            <person name="Ishida J."/>
            <person name="Nakajima M."/>
            <person name="Enju A."/>
            <person name="Kamiya A."/>
            <person name="Narusaka M."/>
            <person name="Shin-i T."/>
            <person name="Nakagawa M."/>
            <person name="Sakamoto N."/>
            <person name="Oishi K."/>
            <person name="Kohara Y."/>
            <person name="Kobayashi M."/>
            <person name="Toyoda A."/>
            <person name="Sakaki Y."/>
            <person name="Sakurai T."/>
            <person name="Iida K."/>
            <person name="Akiyama K."/>
            <person name="Satou M."/>
            <person name="Toyoda T."/>
            <person name="Konagaya A."/>
            <person name="Carninci P."/>
            <person name="Kawai J."/>
            <person name="Hayashizaki Y."/>
            <person name="Shinozaki K."/>
        </authorList>
    </citation>
    <scope>NUCLEOTIDE SEQUENCE [LARGE SCALE MRNA]</scope>
    <source>
        <strain>cv. Columbia</strain>
    </source>
</reference>
<reference key="4">
    <citation type="journal article" date="2002" name="Plant Physiol.">
        <title>The complement of protein phosphatase catalytic subunits encoded in the genome of Arabidopsis.</title>
        <authorList>
            <person name="Kerk D."/>
            <person name="Bulgrien J."/>
            <person name="Smith D.W."/>
            <person name="Barsam B."/>
            <person name="Veretnik S."/>
            <person name="Gribskov M."/>
        </authorList>
    </citation>
    <scope>GENE FAMILY</scope>
</reference>
<reference key="5">
    <citation type="journal article" date="2008" name="Dev. Biol.">
        <title>Comparative transcriptional profiling and evolutionary analysis of the GRAM domain family in eukaryotes.</title>
        <authorList>
            <person name="Jiang S.Y."/>
            <person name="Ramamoorthy R."/>
            <person name="Ramachandran S."/>
        </authorList>
    </citation>
    <scope>GENE FAMILY</scope>
</reference>
<reference key="6">
    <citation type="journal article" date="2009" name="Plant Signal. Behav.">
        <title>The Arabidopsis chromatin modifier ATX1, the myotubularin-like AtMTM and the response to drought.</title>
        <authorList>
            <person name="Ding Y."/>
            <person name="Lapko H."/>
            <person name="Ndamukong I."/>
            <person name="Xia Y."/>
            <person name="Al-Abdallat A."/>
            <person name="Lalithambika S."/>
            <person name="Sadder M."/>
            <person name="Saleh A."/>
            <person name="Fromm M."/>
            <person name="Riethoven J.-J."/>
            <person name="Lu G."/>
            <person name="Avramova Z."/>
        </authorList>
    </citation>
    <scope>NOMENCLATURE</scope>
</reference>
<reference key="7">
    <citation type="journal article" date="2012" name="Plant J.">
        <title>Divergent functions of the myotubularin (MTM) homologs AtMTM1 and AtMTM2 in Arabidopsis thaliana: evolution of the plant MTM family.</title>
        <authorList>
            <person name="Ding Y."/>
            <person name="Ndamukong I."/>
            <person name="Zhao Y."/>
            <person name="Xia Y."/>
            <person name="Riethoven J.-J."/>
            <person name="Jones D.R."/>
            <person name="Divecha N."/>
            <person name="Avramova Z."/>
        </authorList>
    </citation>
    <scope>FUNCTION</scope>
    <scope>DISRUPTION PHENOTYPE</scope>
    <scope>MUTAGENESIS OF LEU-250</scope>
    <scope>SUBCELLULAR LOCATION</scope>
    <scope>CATALYTIC ACTIVITY</scope>
    <scope>DEVELOPMENTAL STAGE</scope>
    <scope>TISSUE SPECIFICITY</scope>
    <scope>BIOPHYSICOCHEMICAL PROPERTIES</scope>
    <source>
        <strain>cv. Columbia</strain>
    </source>
</reference>
<protein>
    <recommendedName>
        <fullName>Phosphatidylinositol-3-phosphatase myotubularin-2</fullName>
        <shortName>AtMTM2</shortName>
    </recommendedName>
    <alternativeName>
        <fullName>Phosphatidylinositol-3,5-bisphosphate 3-phosphatase</fullName>
        <ecNumber evidence="6">3.1.3.95</ecNumber>
    </alternativeName>
    <alternativeName>
        <fullName>Phosphatidylinositol-3-phosphate phosphatase</fullName>
        <ecNumber evidence="6">3.1.3.64</ecNumber>
    </alternativeName>
</protein>
<dbReference type="EC" id="3.1.3.95" evidence="6"/>
<dbReference type="EC" id="3.1.3.64" evidence="6"/>
<dbReference type="EMBL" id="AL162875">
    <property type="protein sequence ID" value="CAB85561.1"/>
    <property type="status" value="ALT_SEQ"/>
    <property type="molecule type" value="Genomic_DNA"/>
</dbReference>
<dbReference type="EMBL" id="CP002688">
    <property type="protein sequence ID" value="AED90758.1"/>
    <property type="molecule type" value="Genomic_DNA"/>
</dbReference>
<dbReference type="EMBL" id="AK229229">
    <property type="protein sequence ID" value="BAF01096.1"/>
    <property type="molecule type" value="mRNA"/>
</dbReference>
<dbReference type="PIR" id="T48451">
    <property type="entry name" value="T48451"/>
</dbReference>
<dbReference type="RefSeq" id="NP_196074.2">
    <property type="nucleotide sequence ID" value="NM_120536.5"/>
</dbReference>
<dbReference type="SMR" id="F4JWB3"/>
<dbReference type="FunCoup" id="F4JWB3">
    <property type="interactions" value="2489"/>
</dbReference>
<dbReference type="STRING" id="3702.F4JWB3"/>
<dbReference type="iPTMnet" id="F4JWB3"/>
<dbReference type="PaxDb" id="3702-AT5G04540.1"/>
<dbReference type="ProteomicsDB" id="248920"/>
<dbReference type="EnsemblPlants" id="AT5G04540.1">
    <property type="protein sequence ID" value="AT5G04540.1"/>
    <property type="gene ID" value="AT5G04540"/>
</dbReference>
<dbReference type="GeneID" id="830333"/>
<dbReference type="Gramene" id="AT5G04540.1">
    <property type="protein sequence ID" value="AT5G04540.1"/>
    <property type="gene ID" value="AT5G04540"/>
</dbReference>
<dbReference type="KEGG" id="ath:AT5G04540"/>
<dbReference type="Araport" id="AT5G04540"/>
<dbReference type="TAIR" id="AT5G04540">
    <property type="gene designation" value="MTM2"/>
</dbReference>
<dbReference type="eggNOG" id="KOG4471">
    <property type="taxonomic scope" value="Eukaryota"/>
</dbReference>
<dbReference type="HOGENOM" id="CLU_017601_0_0_1"/>
<dbReference type="InParanoid" id="F4JWB3"/>
<dbReference type="OMA" id="DYWRITN"/>
<dbReference type="PRO" id="PR:F4JWB3"/>
<dbReference type="Proteomes" id="UP000006548">
    <property type="component" value="Chromosome 5"/>
</dbReference>
<dbReference type="ExpressionAtlas" id="F4JWB3">
    <property type="expression patterns" value="baseline and differential"/>
</dbReference>
<dbReference type="GO" id="GO:0005737">
    <property type="term" value="C:cytoplasm"/>
    <property type="evidence" value="ECO:0000314"/>
    <property type="project" value="UniProtKB"/>
</dbReference>
<dbReference type="GO" id="GO:0052629">
    <property type="term" value="F:phosphatidylinositol-3,5-bisphosphate 3-phosphatase activity"/>
    <property type="evidence" value="ECO:0000314"/>
    <property type="project" value="UniProtKB"/>
</dbReference>
<dbReference type="GO" id="GO:0004438">
    <property type="term" value="F:phosphatidylinositol-3-phosphate phosphatase activity"/>
    <property type="evidence" value="ECO:0000314"/>
    <property type="project" value="UniProtKB"/>
</dbReference>
<dbReference type="GO" id="GO:0004721">
    <property type="term" value="F:phosphoprotein phosphatase activity"/>
    <property type="evidence" value="ECO:0007669"/>
    <property type="project" value="UniProtKB-KW"/>
</dbReference>
<dbReference type="GO" id="GO:0035556">
    <property type="term" value="P:intracellular signal transduction"/>
    <property type="evidence" value="ECO:0000315"/>
    <property type="project" value="UniProtKB"/>
</dbReference>
<dbReference type="GO" id="GO:0006629">
    <property type="term" value="P:lipid metabolic process"/>
    <property type="evidence" value="ECO:0007669"/>
    <property type="project" value="UniProtKB-KW"/>
</dbReference>
<dbReference type="CDD" id="cd14507">
    <property type="entry name" value="PTP-MTM-like"/>
    <property type="match status" value="1"/>
</dbReference>
<dbReference type="Gene3D" id="2.30.29.30">
    <property type="entry name" value="Pleckstrin-homology domain (PH domain)/Phosphotyrosine-binding domain (PTB)"/>
    <property type="match status" value="1"/>
</dbReference>
<dbReference type="InterPro" id="IPR004182">
    <property type="entry name" value="GRAM"/>
</dbReference>
<dbReference type="InterPro" id="IPR030564">
    <property type="entry name" value="Myotubularin"/>
</dbReference>
<dbReference type="InterPro" id="IPR010569">
    <property type="entry name" value="Myotubularin-like_Pase_dom"/>
</dbReference>
<dbReference type="InterPro" id="IPR011993">
    <property type="entry name" value="PH-like_dom_sf"/>
</dbReference>
<dbReference type="InterPro" id="IPR029021">
    <property type="entry name" value="Prot-tyrosine_phosphatase-like"/>
</dbReference>
<dbReference type="InterPro" id="IPR016130">
    <property type="entry name" value="Tyr_Pase_AS"/>
</dbReference>
<dbReference type="PANTHER" id="PTHR10807">
    <property type="entry name" value="MYOTUBULARIN-RELATED"/>
    <property type="match status" value="1"/>
</dbReference>
<dbReference type="PANTHER" id="PTHR10807:SF125">
    <property type="entry name" value="PHOSPHATIDYLINOSITOL-3-PHOSPHATASE MYOTUBULARIN-2"/>
    <property type="match status" value="1"/>
</dbReference>
<dbReference type="Pfam" id="PF06602">
    <property type="entry name" value="Myotub-related"/>
    <property type="match status" value="1"/>
</dbReference>
<dbReference type="SMART" id="SM00568">
    <property type="entry name" value="GRAM"/>
    <property type="match status" value="1"/>
</dbReference>
<dbReference type="SUPFAM" id="SSF52799">
    <property type="entry name" value="(Phosphotyrosine protein) phosphatases II"/>
    <property type="match status" value="1"/>
</dbReference>
<dbReference type="SUPFAM" id="SSF50729">
    <property type="entry name" value="PH domain-like"/>
    <property type="match status" value="1"/>
</dbReference>
<dbReference type="PROSITE" id="PS51339">
    <property type="entry name" value="PPASE_MYOTUBULARIN"/>
    <property type="match status" value="1"/>
</dbReference>
<dbReference type="PROSITE" id="PS00383">
    <property type="entry name" value="TYR_PHOSPHATASE_1"/>
    <property type="match status" value="1"/>
</dbReference>
<proteinExistence type="evidence at protein level"/>
<name>MYTM2_ARATH</name>
<feature type="chain" id="PRO_0000425084" description="Phosphatidylinositol-3-phosphatase myotubularin-2">
    <location>
        <begin position="1"/>
        <end position="833"/>
    </location>
</feature>
<feature type="domain" description="GRAM">
    <location>
        <begin position="42"/>
        <end position="109"/>
    </location>
</feature>
<feature type="domain" description="Myotubularin phosphatase" evidence="3">
    <location>
        <begin position="181"/>
        <end position="647"/>
    </location>
</feature>
<feature type="region of interest" description="Disordered" evidence="5">
    <location>
        <begin position="503"/>
        <end position="530"/>
    </location>
</feature>
<feature type="region of interest" description="Disordered" evidence="5">
    <location>
        <begin position="753"/>
        <end position="772"/>
    </location>
</feature>
<feature type="coiled-coil region" evidence="2">
    <location>
        <begin position="660"/>
        <end position="717"/>
    </location>
</feature>
<feature type="compositionally biased region" description="Low complexity" evidence="5">
    <location>
        <begin position="504"/>
        <end position="530"/>
    </location>
</feature>
<feature type="active site" description="Phosphocysteine intermediate" evidence="4">
    <location>
        <position position="440"/>
    </location>
</feature>
<feature type="binding site" evidence="1">
    <location>
        <begin position="329"/>
        <end position="332"/>
    </location>
    <ligand>
        <name>substrate</name>
    </ligand>
</feature>
<feature type="binding site" evidence="1">
    <location>
        <begin position="354"/>
        <end position="355"/>
    </location>
    <ligand>
        <name>substrate</name>
    </ligand>
</feature>
<feature type="binding site" evidence="1">
    <location>
        <begin position="440"/>
        <end position="446"/>
    </location>
    <ligand>
        <name>substrate</name>
    </ligand>
</feature>
<feature type="binding site" evidence="1">
    <location>
        <position position="486"/>
    </location>
    <ligand>
        <name>substrate</name>
    </ligand>
</feature>
<feature type="mutagenesis site" description="Modified subcellular location at granular particles." evidence="6">
    <original>L</original>
    <variation>W</variation>
    <location>
        <position position="250"/>
    </location>
</feature>
<feature type="sequence conflict" description="In Ref. 3; BAF01096." evidence="7" ref="3">
    <original>L</original>
    <variation>F</variation>
    <location>
        <position position="250"/>
    </location>
</feature>
<sequence length="833" mass="92588">MTALRPLSGRSRSLRCSSEKMEGTGSWDVLEWTKLDSASWSGSYSNLDCLLESERIIFEACGVILINTDEAGTLLLSNFRILFLSEGTRKLVPLGTIPFVAIEKFNKLAPKVQSNKYHNNENAPTRLLQVTGKDMRIVVYGFRPGTKQRHTVVDTLLRCNKPERVWDLYAFTCGPSQFGNTNPKERLLNEYFRLLGKSSQRASMNMIEDGSFTLSNDLWRITNLNSNYDLCQSYPFALMVPKSISDEELLQTSTFRARCRLPVISWCHPGSGAVIARSSQPLVGLMMNMRSNSDEKLVASFCTQLAGHKGARRKLYIVDARPRKNALANGAKGGGSESSSNYLQSEIVFLGIDNIHAMRESFSRLRDYLDMHGTTSSDGTSSFLRHGGWTWGGGNLSSMSASVSVLGDSGWLSHIQSILAGVAWIAARVAMESASVLVHCSDGWDRTTQLVSLACLLLDPYYRTFSGFQALVEKDWLSFGHPFSDRVGMPNVSESGNFELPIQSSSARSFPSSPVRQSPGSAAAQSSSSSYGLNNYSPIFLQWLDCISQLMRMYPSAFEFSPTFLVDFIDCLLSCRFGNFLCNSEKERQQCGISETCGCIWAYLADLRSSSGTSHVHCNPFYDPSRYDGPLLPPAAALAPTLWPQFHLRWACPVEPNVTETEDQCRAMTVKYSEMKKEKEEAERKVDELSSAMESLNEELLNERDISRAARESAKRATKERAVISRAVQSLGCKVKFTRNGDCTVEVEDGPQKCSHSIPQKQSEDNTTDVSESISSVTEQNVCEAVCPLRTREGTCRWPDAGCARIGNQFLGLKTNFEAFDNLCVYDSYFTAE</sequence>
<organism>
    <name type="scientific">Arabidopsis thaliana</name>
    <name type="common">Mouse-ear cress</name>
    <dbReference type="NCBI Taxonomy" id="3702"/>
    <lineage>
        <taxon>Eukaryota</taxon>
        <taxon>Viridiplantae</taxon>
        <taxon>Streptophyta</taxon>
        <taxon>Embryophyta</taxon>
        <taxon>Tracheophyta</taxon>
        <taxon>Spermatophyta</taxon>
        <taxon>Magnoliopsida</taxon>
        <taxon>eudicotyledons</taxon>
        <taxon>Gunneridae</taxon>
        <taxon>Pentapetalae</taxon>
        <taxon>rosids</taxon>
        <taxon>malvids</taxon>
        <taxon>Brassicales</taxon>
        <taxon>Brassicaceae</taxon>
        <taxon>Camelineae</taxon>
        <taxon>Arabidopsis</taxon>
    </lineage>
</organism>
<comment type="function">
    <text evidence="6">Phosphatase with phosphoinositide 3'-phosphatase activity that can use phosphatidylinositol-3-phosphate (PtdIns3P) and phosphatidylinositol-3,5-diphosphate (PtdIns3,5P(2)) as substrates and produces phosphatidylinositol-5-phosphate (PtdIns5P); participates in pathway(s) that transfer gene regulatory signals to the nucleus.</text>
</comment>
<comment type="catalytic activity">
    <reaction evidence="6">
        <text>a 1,2-diacyl-sn-glycero-3-phospho-(1D-myo-inositol-3-phosphate) + H2O = a 1,2-diacyl-sn-glycero-3-phospho-(1D-myo-inositol) + phosphate</text>
        <dbReference type="Rhea" id="RHEA:12316"/>
        <dbReference type="ChEBI" id="CHEBI:15377"/>
        <dbReference type="ChEBI" id="CHEBI:43474"/>
        <dbReference type="ChEBI" id="CHEBI:57880"/>
        <dbReference type="ChEBI" id="CHEBI:58088"/>
        <dbReference type="EC" id="3.1.3.64"/>
    </reaction>
</comment>
<comment type="catalytic activity">
    <reaction evidence="6">
        <text>a 1,2-diacyl-sn-glycero-3-phospho-(1D-myo-inositol-3,5-bisphosphate) + H2O = a 1,2-diacyl-sn-glycero-3-phospho-(1D-myo-inositol-5-phosphate) + phosphate</text>
        <dbReference type="Rhea" id="RHEA:39019"/>
        <dbReference type="ChEBI" id="CHEBI:15377"/>
        <dbReference type="ChEBI" id="CHEBI:43474"/>
        <dbReference type="ChEBI" id="CHEBI:57795"/>
        <dbReference type="ChEBI" id="CHEBI:57923"/>
        <dbReference type="EC" id="3.1.3.95"/>
    </reaction>
</comment>
<comment type="biophysicochemical properties">
    <kinetics>
        <KM evidence="6">216.5 uM for PtdIns3P</KM>
        <KM evidence="6">158.2 uM for PtdIns3,5P(2)</KM>
        <Vmax evidence="6">15.4 pmol/min/mg enzyme with PtdIns3P as substrate</Vmax>
        <Vmax evidence="6">28.4 pmol/min/mg enzyme with PtdIns3,5P(2) as substrate</Vmax>
    </kinetics>
</comment>
<comment type="subcellular location">
    <subcellularLocation>
        <location evidence="6">Cytoplasm</location>
    </subcellularLocation>
    <text>Highly concentrated at the peripheral lobes of the epidermal cells.</text>
</comment>
<comment type="tissue specificity">
    <text evidence="6">Mostly expressed in flowers and roots, and, to a lower extent, in siliques and leaves.</text>
</comment>
<comment type="developmental stage">
    <text evidence="6">Expressed in young seedlings, especially at the tip of the growing shoot meristems. Later observed in roots and in aerial parts. Weakly expressed in leaves with local higher levels in the trichomes and in cotyledon veins. Present at low levels in flowers with higher accumulation in cells at organ-stem junctions. Restricted to the developing peduncle.</text>
</comment>
<comment type="disruption phenotype">
    <text evidence="6">No visible phenotype in both normal and dehydration conditions.</text>
</comment>
<comment type="similarity">
    <text evidence="7">Belongs to the protein-tyrosine phosphatase family. Non-receptor class myotubularin subfamily.</text>
</comment>
<comment type="sequence caution" evidence="7">
    <conflict type="erroneous gene model prediction">
        <sequence resource="EMBL-CDS" id="CAB85561"/>
    </conflict>
</comment>
<evidence type="ECO:0000250" key="1"/>
<evidence type="ECO:0000255" key="2"/>
<evidence type="ECO:0000255" key="3">
    <source>
        <dbReference type="PROSITE-ProRule" id="PRU00669"/>
    </source>
</evidence>
<evidence type="ECO:0000255" key="4">
    <source>
        <dbReference type="PROSITE-ProRule" id="PRU10044"/>
    </source>
</evidence>
<evidence type="ECO:0000256" key="5">
    <source>
        <dbReference type="SAM" id="MobiDB-lite"/>
    </source>
</evidence>
<evidence type="ECO:0000269" key="6">
    <source>
    </source>
</evidence>
<evidence type="ECO:0000305" key="7"/>
<gene>
    <name type="primary">MTM2</name>
    <name type="ordered locus">At5g04540</name>
    <name type="ORF">T32M21.150</name>
</gene>
<keyword id="KW-0175">Coiled coil</keyword>
<keyword id="KW-0963">Cytoplasm</keyword>
<keyword id="KW-0378">Hydrolase</keyword>
<keyword id="KW-0443">Lipid metabolism</keyword>
<keyword id="KW-0904">Protein phosphatase</keyword>
<keyword id="KW-1185">Reference proteome</keyword>
<accession>F4JWB3</accession>
<accession>Q0WP53</accession>
<accession>Q9LZ70</accession>